<proteinExistence type="inferred from homology"/>
<keyword id="KW-0058">Aromatic hydrocarbons catabolism</keyword>
<keyword id="KW-0520">NAD</keyword>
<keyword id="KW-0560">Oxidoreductase</keyword>
<accession>B1IVT6</accession>
<gene>
    <name evidence="1" type="primary">hcaB</name>
    <name type="ordered locus">EcolC_1136</name>
</gene>
<evidence type="ECO:0000255" key="1">
    <source>
        <dbReference type="HAMAP-Rule" id="MF_01647"/>
    </source>
</evidence>
<comment type="function">
    <text evidence="1">Converts 3-phenylpropionate-dihydrodiol (PP-dihydrodiol) and cinnamic acid-dihydrodiol (CI-dihydrodiol) into 3-(2,3-dihydroxylphenyl)propanoic acid (DHPP) and 2,3-dihydroxicinnamic acid (DHCI), respectively.</text>
</comment>
<comment type="catalytic activity">
    <reaction evidence="1">
        <text>3-(cis-5,6-dihydroxycyclohexa-1,3-dien-1-yl)propanoate + NAD(+) = 3-(2,3-dihydroxyphenyl)propanoate + NADH + H(+)</text>
        <dbReference type="Rhea" id="RHEA:25062"/>
        <dbReference type="ChEBI" id="CHEBI:15378"/>
        <dbReference type="ChEBI" id="CHEBI:46951"/>
        <dbReference type="ChEBI" id="CHEBI:57540"/>
        <dbReference type="ChEBI" id="CHEBI:57945"/>
        <dbReference type="ChEBI" id="CHEBI:60087"/>
        <dbReference type="EC" id="1.3.1.87"/>
    </reaction>
</comment>
<comment type="catalytic activity">
    <reaction evidence="1">
        <text>(2E)-3-(cis-5,6-dihydroxycyclohexa-1,3-dien-1-yl)prop-2-enoate + NAD(+) = (2E)-3-(2,3-dihydroxyphenyl)prop-2-enoate + NADH + H(+)</text>
        <dbReference type="Rhea" id="RHEA:25066"/>
        <dbReference type="ChEBI" id="CHEBI:15378"/>
        <dbReference type="ChEBI" id="CHEBI:57540"/>
        <dbReference type="ChEBI" id="CHEBI:57945"/>
        <dbReference type="ChEBI" id="CHEBI:58642"/>
        <dbReference type="ChEBI" id="CHEBI:61451"/>
        <dbReference type="EC" id="1.3.1.87"/>
    </reaction>
</comment>
<comment type="pathway">
    <text evidence="1">Aromatic compound metabolism; 3-phenylpropanoate degradation.</text>
</comment>
<comment type="similarity">
    <text evidence="1">Belongs to the short-chain dehydrogenases/reductases (SDR) family.</text>
</comment>
<name>HCAB_ECOLC</name>
<dbReference type="EC" id="1.3.1.87" evidence="1"/>
<dbReference type="EMBL" id="CP000946">
    <property type="protein sequence ID" value="ACA76803.1"/>
    <property type="molecule type" value="Genomic_DNA"/>
</dbReference>
<dbReference type="RefSeq" id="WP_001281377.1">
    <property type="nucleotide sequence ID" value="NZ_MTFT01000002.1"/>
</dbReference>
<dbReference type="SMR" id="B1IVT6"/>
<dbReference type="GeneID" id="75206234"/>
<dbReference type="KEGG" id="ecl:EcolC_1136"/>
<dbReference type="HOGENOM" id="CLU_010194_1_0_6"/>
<dbReference type="UniPathway" id="UPA00714"/>
<dbReference type="GO" id="GO:0018498">
    <property type="term" value="F:2,3-dihydroxy-2,3-dihydro-phenylpropionate dehydrogenase activity"/>
    <property type="evidence" value="ECO:0007669"/>
    <property type="project" value="UniProtKB-UniRule"/>
</dbReference>
<dbReference type="GO" id="GO:0019380">
    <property type="term" value="P:3-phenylpropionate catabolic process"/>
    <property type="evidence" value="ECO:0007669"/>
    <property type="project" value="UniProtKB-UniRule"/>
</dbReference>
<dbReference type="CDD" id="cd05348">
    <property type="entry name" value="BphB-like_SDR_c"/>
    <property type="match status" value="1"/>
</dbReference>
<dbReference type="FunFam" id="3.40.50.720:FF:000151">
    <property type="entry name" value="3-phenylpropionate-dihydrodiol/cinnamic acid-dihydrodiol dehydrogenase"/>
    <property type="match status" value="1"/>
</dbReference>
<dbReference type="Gene3D" id="3.40.50.720">
    <property type="entry name" value="NAD(P)-binding Rossmann-like Domain"/>
    <property type="match status" value="1"/>
</dbReference>
<dbReference type="HAMAP" id="MF_01647">
    <property type="entry name" value="HcaB"/>
    <property type="match status" value="1"/>
</dbReference>
<dbReference type="InterPro" id="IPR047950">
    <property type="entry name" value="BphB-like_SDR"/>
</dbReference>
<dbReference type="InterPro" id="IPR023643">
    <property type="entry name" value="Dihydrodiol_DH_HcaB"/>
</dbReference>
<dbReference type="InterPro" id="IPR036291">
    <property type="entry name" value="NAD(P)-bd_dom_sf"/>
</dbReference>
<dbReference type="InterPro" id="IPR020904">
    <property type="entry name" value="Sc_DH/Rdtase_CS"/>
</dbReference>
<dbReference type="InterPro" id="IPR002347">
    <property type="entry name" value="SDR_fam"/>
</dbReference>
<dbReference type="NCBIfam" id="NF042950">
    <property type="entry name" value="3PPDhyd_Dh_HcaB"/>
    <property type="match status" value="1"/>
</dbReference>
<dbReference type="NCBIfam" id="NF004849">
    <property type="entry name" value="PRK06200.1"/>
    <property type="match status" value="1"/>
</dbReference>
<dbReference type="PANTHER" id="PTHR43943:SF17">
    <property type="entry name" value="3-PHENYLPROPIONATE-DIHYDRODIOL_CINNAMIC ACID-DIHYDRODIOL DEHYDROGENASE"/>
    <property type="match status" value="1"/>
</dbReference>
<dbReference type="PANTHER" id="PTHR43943">
    <property type="entry name" value="DEHYDROGENASE/REDUCTASE (SDR FAMILY) MEMBER 4"/>
    <property type="match status" value="1"/>
</dbReference>
<dbReference type="Pfam" id="PF00106">
    <property type="entry name" value="adh_short"/>
    <property type="match status" value="1"/>
</dbReference>
<dbReference type="PRINTS" id="PR00081">
    <property type="entry name" value="GDHRDH"/>
</dbReference>
<dbReference type="PRINTS" id="PR00080">
    <property type="entry name" value="SDRFAMILY"/>
</dbReference>
<dbReference type="SUPFAM" id="SSF51735">
    <property type="entry name" value="NAD(P)-binding Rossmann-fold domains"/>
    <property type="match status" value="1"/>
</dbReference>
<dbReference type="PROSITE" id="PS00061">
    <property type="entry name" value="ADH_SHORT"/>
    <property type="match status" value="1"/>
</dbReference>
<feature type="chain" id="PRO_1000186968" description="3-phenylpropionate-dihydrodiol/cinnamic acid-dihydrodiol dehydrogenase">
    <location>
        <begin position="1"/>
        <end position="270"/>
    </location>
</feature>
<feature type="active site" description="Proton acceptor" evidence="1">
    <location>
        <position position="156"/>
    </location>
</feature>
<feature type="binding site" evidence="1">
    <location>
        <begin position="10"/>
        <end position="34"/>
    </location>
    <ligand>
        <name>NAD(+)</name>
        <dbReference type="ChEBI" id="CHEBI:57540"/>
    </ligand>
</feature>
<feature type="binding site" evidence="1">
    <location>
        <position position="143"/>
    </location>
    <ligand>
        <name>substrate</name>
    </ligand>
</feature>
<sequence>MSDLHNESIFITGGGSGLGLALVERFIEEGAQVATLELSAAKVASLRQRFGEHILAVEGNVTCYADYQRAVDQILTRSGKLDCFIGNAGIWDHNASLVNTPAETLETGFHELFNVNVLGYLLGAKACAPALIASEGSMIFTLSNAAWYPGGGGPLYTASKHAATGLIRQLAYELAPKVRVNGVGPCGMASDLRGPQALGQSETSIMQSLTPEKIAAILPLQFFPQPADFTGPYVMLASRRNNRALSGVMINADAGLAIRGIRHVAAGLDL</sequence>
<reference key="1">
    <citation type="submission" date="2008-02" db="EMBL/GenBank/DDBJ databases">
        <title>Complete sequence of Escherichia coli C str. ATCC 8739.</title>
        <authorList>
            <person name="Copeland A."/>
            <person name="Lucas S."/>
            <person name="Lapidus A."/>
            <person name="Glavina del Rio T."/>
            <person name="Dalin E."/>
            <person name="Tice H."/>
            <person name="Bruce D."/>
            <person name="Goodwin L."/>
            <person name="Pitluck S."/>
            <person name="Kiss H."/>
            <person name="Brettin T."/>
            <person name="Detter J.C."/>
            <person name="Han C."/>
            <person name="Kuske C.R."/>
            <person name="Schmutz J."/>
            <person name="Larimer F."/>
            <person name="Land M."/>
            <person name="Hauser L."/>
            <person name="Kyrpides N."/>
            <person name="Mikhailova N."/>
            <person name="Ingram L."/>
            <person name="Richardson P."/>
        </authorList>
    </citation>
    <scope>NUCLEOTIDE SEQUENCE [LARGE SCALE GENOMIC DNA]</scope>
    <source>
        <strain>ATCC 8739 / DSM 1576 / NBRC 3972 / NCIMB 8545 / WDCM 00012 / Crooks</strain>
    </source>
</reference>
<organism>
    <name type="scientific">Escherichia coli (strain ATCC 8739 / DSM 1576 / NBRC 3972 / NCIMB 8545 / WDCM 00012 / Crooks)</name>
    <dbReference type="NCBI Taxonomy" id="481805"/>
    <lineage>
        <taxon>Bacteria</taxon>
        <taxon>Pseudomonadati</taxon>
        <taxon>Pseudomonadota</taxon>
        <taxon>Gammaproteobacteria</taxon>
        <taxon>Enterobacterales</taxon>
        <taxon>Enterobacteriaceae</taxon>
        <taxon>Escherichia</taxon>
    </lineage>
</organism>
<protein>
    <recommendedName>
        <fullName evidence="1">3-phenylpropionate-dihydrodiol/cinnamic acid-dihydrodiol dehydrogenase</fullName>
        <ecNumber evidence="1">1.3.1.87</ecNumber>
    </recommendedName>
    <alternativeName>
        <fullName evidence="1">2,3-dihydroxy-2,3-dihydrophenylpropionate dehydrogenase</fullName>
    </alternativeName>
    <alternativeName>
        <fullName evidence="1">3-(cis-5,6-dihydroxycyclohexa-1,3-dien-1-yl)propanoate dehydrogenase</fullName>
    </alternativeName>
    <alternativeName>
        <fullName evidence="1">CI-dihydrodiol dehydrogenase</fullName>
    </alternativeName>
    <alternativeName>
        <fullName evidence="1">Cis-3-(2-carboxyethenyl)-3,5-cyclohexadiene-1,2-diol dehydrogenase</fullName>
    </alternativeName>
    <alternativeName>
        <fullName evidence="1">Cis-3-(2-carboxyethyl)-3,5-cyclohexadiene-1,2-diol dehydrogenase</fullName>
    </alternativeName>
    <alternativeName>
        <fullName evidence="1">PP-dihydrodiol dehydrogenase</fullName>
    </alternativeName>
</protein>